<proteinExistence type="evidence at protein level"/>
<sequence>MTSMASLFSFTSPAVKRLLGWKQGDEEEKWAEKAVDALVKKLKKKKGAMEELEKALSSPGQPSKCVTIPRSLDGRLQVSHRKGLPHVIYCRVWRWPDLQSHHELKPLDICEFPFGSKQKEVCINPYHYKRVESPVLPPVLVPRHSEFNPQHSLLVQFRNLSHNEPHMPHNATFPDSFQQPNSTPFSISPNSPYPPSPASSTYPSSPASSGPSSPFQLPADTPPPAYMPPDDQMGQDNSQSMDTSNTMIPQIMPNISTRDVQPVAYEEPKHWCSIVYYELNNRVGEAFHASSTSVLVDGFTDPSNNKNRFCLGLLSNVNRNSTIENTRRHIGKGVHLYYVGGEVYAECLSDSSIFVQSRNCNYHHGFHPTTVCKIPSGCSLKIFNNQEFAQLLAQSVNHGFEAVYELTKMCTIRMSFVKGWGAEYHRQDVTSTPCWIEIHLHGPLQWLDKVLTQMGSPLNPISSVS</sequence>
<gene>
    <name type="primary">SMAD5</name>
    <name type="synonym">MADH5</name>
</gene>
<organism>
    <name type="scientific">Gallus gallus</name>
    <name type="common">Chicken</name>
    <dbReference type="NCBI Taxonomy" id="9031"/>
    <lineage>
        <taxon>Eukaryota</taxon>
        <taxon>Metazoa</taxon>
        <taxon>Chordata</taxon>
        <taxon>Craniata</taxon>
        <taxon>Vertebrata</taxon>
        <taxon>Euteleostomi</taxon>
        <taxon>Archelosauria</taxon>
        <taxon>Archosauria</taxon>
        <taxon>Dinosauria</taxon>
        <taxon>Saurischia</taxon>
        <taxon>Theropoda</taxon>
        <taxon>Coelurosauria</taxon>
        <taxon>Aves</taxon>
        <taxon>Neognathae</taxon>
        <taxon>Galloanserae</taxon>
        <taxon>Galliformes</taxon>
        <taxon>Phasianidae</taxon>
        <taxon>Phasianinae</taxon>
        <taxon>Gallus</taxon>
    </lineage>
</organism>
<reference key="1">
    <citation type="submission" date="2005-03" db="EMBL/GenBank/DDBJ databases">
        <title>Cloning of Smad 1, Smad5 and Smad8 from the chicken ovary and characterization of their expression during chicken ovarian development.</title>
        <authorList>
            <person name="Li J."/>
            <person name="Wang Y."/>
            <person name="Hon C."/>
            <person name="Wong E.W."/>
            <person name="Leung F.C."/>
        </authorList>
    </citation>
    <scope>NUCLEOTIDE SEQUENCE [MRNA]</scope>
    <source>
        <tissue>Ovary</tissue>
    </source>
</reference>
<name>SMAD5_CHICK</name>
<accession>Q56I99</accession>
<dbReference type="EMBL" id="AY953144">
    <property type="protein sequence ID" value="AAX56945.1"/>
    <property type="molecule type" value="mRNA"/>
</dbReference>
<dbReference type="RefSeq" id="NP_001014968.1">
    <property type="nucleotide sequence ID" value="NM_001014968.1"/>
</dbReference>
<dbReference type="RefSeq" id="XP_015149452.1">
    <property type="nucleotide sequence ID" value="XM_015293966.1"/>
</dbReference>
<dbReference type="RefSeq" id="XP_015149453.1">
    <property type="nucleotide sequence ID" value="XM_015293967.4"/>
</dbReference>
<dbReference type="RefSeq" id="XP_015149454.1">
    <property type="nucleotide sequence ID" value="XM_015293968.1"/>
</dbReference>
<dbReference type="RefSeq" id="XP_040502787.1">
    <property type="nucleotide sequence ID" value="XM_040646853.2"/>
</dbReference>
<dbReference type="RefSeq" id="XP_046756243.1">
    <property type="nucleotide sequence ID" value="XM_046900287.1"/>
</dbReference>
<dbReference type="RefSeq" id="XP_046756244.1">
    <property type="nucleotide sequence ID" value="XM_046900288.1"/>
</dbReference>
<dbReference type="RefSeq" id="XP_046756245.1">
    <property type="nucleotide sequence ID" value="XM_046900289.1"/>
</dbReference>
<dbReference type="RefSeq" id="XP_046756246.1">
    <property type="nucleotide sequence ID" value="XM_046900290.1"/>
</dbReference>
<dbReference type="RefSeq" id="XP_046782788.1">
    <property type="nucleotide sequence ID" value="XM_046926832.1"/>
</dbReference>
<dbReference type="RefSeq" id="XP_046782789.1">
    <property type="nucleotide sequence ID" value="XM_046926833.1"/>
</dbReference>
<dbReference type="RefSeq" id="XP_046782790.1">
    <property type="nucleotide sequence ID" value="XM_046926834.1"/>
</dbReference>
<dbReference type="RefSeq" id="XP_046782791.1">
    <property type="nucleotide sequence ID" value="XM_046926835.1"/>
</dbReference>
<dbReference type="RefSeq" id="XP_046782792.1">
    <property type="nucleotide sequence ID" value="XM_046926836.1"/>
</dbReference>
<dbReference type="PDB" id="6TBZ">
    <property type="method" value="X-ray"/>
    <property type="resolution" value="1.78 A"/>
    <property type="chains" value="A=11-138"/>
</dbReference>
<dbReference type="PDBsum" id="6TBZ"/>
<dbReference type="SMR" id="Q56I99"/>
<dbReference type="FunCoup" id="Q56I99">
    <property type="interactions" value="2976"/>
</dbReference>
<dbReference type="STRING" id="9031.ENSGALP00000039387"/>
<dbReference type="PaxDb" id="9031-ENSGALP00000039387"/>
<dbReference type="GeneID" id="395679"/>
<dbReference type="KEGG" id="gga:395679"/>
<dbReference type="CTD" id="4090"/>
<dbReference type="VEuPathDB" id="HostDB:geneid_395679"/>
<dbReference type="eggNOG" id="KOG3701">
    <property type="taxonomic scope" value="Eukaryota"/>
</dbReference>
<dbReference type="HOGENOM" id="CLU_026736_0_2_1"/>
<dbReference type="InParanoid" id="Q56I99"/>
<dbReference type="OMA" id="QPMDTGN"/>
<dbReference type="OrthoDB" id="5794312at2759"/>
<dbReference type="PhylomeDB" id="Q56I99"/>
<dbReference type="Reactome" id="R-GGA-201451">
    <property type="pathway name" value="Signaling by BMP"/>
</dbReference>
<dbReference type="PRO" id="PR:Q56I99"/>
<dbReference type="Proteomes" id="UP000000539">
    <property type="component" value="Chromosome 13"/>
</dbReference>
<dbReference type="Bgee" id="ENSGALG00000006309">
    <property type="expression patterns" value="Expressed in spermatocyte and 13 other cell types or tissues"/>
</dbReference>
<dbReference type="GO" id="GO:0005737">
    <property type="term" value="C:cytoplasm"/>
    <property type="evidence" value="ECO:0007669"/>
    <property type="project" value="UniProtKB-SubCell"/>
</dbReference>
<dbReference type="GO" id="GO:0071144">
    <property type="term" value="C:heteromeric SMAD protein complex"/>
    <property type="evidence" value="ECO:0000318"/>
    <property type="project" value="GO_Central"/>
</dbReference>
<dbReference type="GO" id="GO:0005634">
    <property type="term" value="C:nucleus"/>
    <property type="evidence" value="ECO:0000314"/>
    <property type="project" value="AgBase"/>
</dbReference>
<dbReference type="GO" id="GO:0000981">
    <property type="term" value="F:DNA-binding transcription factor activity, RNA polymerase II-specific"/>
    <property type="evidence" value="ECO:0000318"/>
    <property type="project" value="GO_Central"/>
</dbReference>
<dbReference type="GO" id="GO:0070411">
    <property type="term" value="F:I-SMAD binding"/>
    <property type="evidence" value="ECO:0000318"/>
    <property type="project" value="GO_Central"/>
</dbReference>
<dbReference type="GO" id="GO:0046872">
    <property type="term" value="F:metal ion binding"/>
    <property type="evidence" value="ECO:0007669"/>
    <property type="project" value="UniProtKB-KW"/>
</dbReference>
<dbReference type="GO" id="GO:0000978">
    <property type="term" value="F:RNA polymerase II cis-regulatory region sequence-specific DNA binding"/>
    <property type="evidence" value="ECO:0000318"/>
    <property type="project" value="GO_Central"/>
</dbReference>
<dbReference type="GO" id="GO:0009653">
    <property type="term" value="P:anatomical structure morphogenesis"/>
    <property type="evidence" value="ECO:0000318"/>
    <property type="project" value="GO_Central"/>
</dbReference>
<dbReference type="GO" id="GO:0030509">
    <property type="term" value="P:BMP signaling pathway"/>
    <property type="evidence" value="ECO:0000318"/>
    <property type="project" value="GO_Central"/>
</dbReference>
<dbReference type="GO" id="GO:0030154">
    <property type="term" value="P:cell differentiation"/>
    <property type="evidence" value="ECO:0000318"/>
    <property type="project" value="GO_Central"/>
</dbReference>
<dbReference type="GO" id="GO:0006357">
    <property type="term" value="P:regulation of transcription by RNA polymerase II"/>
    <property type="evidence" value="ECO:0000318"/>
    <property type="project" value="GO_Central"/>
</dbReference>
<dbReference type="GO" id="GO:0060395">
    <property type="term" value="P:SMAD protein signal transduction"/>
    <property type="evidence" value="ECO:0000318"/>
    <property type="project" value="GO_Central"/>
</dbReference>
<dbReference type="GO" id="GO:0007179">
    <property type="term" value="P:transforming growth factor beta receptor signaling pathway"/>
    <property type="evidence" value="ECO:0000318"/>
    <property type="project" value="GO_Central"/>
</dbReference>
<dbReference type="CDD" id="cd10490">
    <property type="entry name" value="MH1_SMAD_1_5_9"/>
    <property type="match status" value="1"/>
</dbReference>
<dbReference type="CDD" id="cd10497">
    <property type="entry name" value="MH2_SMAD_1_5_9"/>
    <property type="match status" value="1"/>
</dbReference>
<dbReference type="FunFam" id="2.60.200.10:FF:000001">
    <property type="entry name" value="Mothers against decapentaplegic homolog"/>
    <property type="match status" value="1"/>
</dbReference>
<dbReference type="FunFam" id="3.90.520.10:FF:000001">
    <property type="entry name" value="Mothers against decapentaplegic homolog"/>
    <property type="match status" value="1"/>
</dbReference>
<dbReference type="Gene3D" id="2.60.200.10">
    <property type="match status" value="1"/>
</dbReference>
<dbReference type="Gene3D" id="3.90.520.10">
    <property type="entry name" value="SMAD MH1 domain"/>
    <property type="match status" value="1"/>
</dbReference>
<dbReference type="InterPro" id="IPR013790">
    <property type="entry name" value="Dwarfin"/>
</dbReference>
<dbReference type="InterPro" id="IPR003619">
    <property type="entry name" value="MAD_homology1_Dwarfin-type"/>
</dbReference>
<dbReference type="InterPro" id="IPR013019">
    <property type="entry name" value="MAD_homology_MH1"/>
</dbReference>
<dbReference type="InterPro" id="IPR017855">
    <property type="entry name" value="SMAD-like_dom_sf"/>
</dbReference>
<dbReference type="InterPro" id="IPR001132">
    <property type="entry name" value="SMAD_dom_Dwarfin-type"/>
</dbReference>
<dbReference type="InterPro" id="IPR008984">
    <property type="entry name" value="SMAD_FHA_dom_sf"/>
</dbReference>
<dbReference type="InterPro" id="IPR036578">
    <property type="entry name" value="SMAD_MH1_sf"/>
</dbReference>
<dbReference type="PANTHER" id="PTHR13703:SF36">
    <property type="entry name" value="MOTHERS AGAINST DECAPENTAPLEGIC HOMOLOG 5"/>
    <property type="match status" value="1"/>
</dbReference>
<dbReference type="PANTHER" id="PTHR13703">
    <property type="entry name" value="SMAD"/>
    <property type="match status" value="1"/>
</dbReference>
<dbReference type="Pfam" id="PF03165">
    <property type="entry name" value="MH1"/>
    <property type="match status" value="1"/>
</dbReference>
<dbReference type="Pfam" id="PF03166">
    <property type="entry name" value="MH2"/>
    <property type="match status" value="1"/>
</dbReference>
<dbReference type="SMART" id="SM00523">
    <property type="entry name" value="DWA"/>
    <property type="match status" value="1"/>
</dbReference>
<dbReference type="SMART" id="SM00524">
    <property type="entry name" value="DWB"/>
    <property type="match status" value="1"/>
</dbReference>
<dbReference type="SUPFAM" id="SSF56366">
    <property type="entry name" value="SMAD MH1 domain"/>
    <property type="match status" value="1"/>
</dbReference>
<dbReference type="SUPFAM" id="SSF49879">
    <property type="entry name" value="SMAD/FHA domain"/>
    <property type="match status" value="1"/>
</dbReference>
<dbReference type="PROSITE" id="PS51075">
    <property type="entry name" value="MH1"/>
    <property type="match status" value="1"/>
</dbReference>
<dbReference type="PROSITE" id="PS51076">
    <property type="entry name" value="MH2"/>
    <property type="match status" value="1"/>
</dbReference>
<comment type="function">
    <text evidence="1">Transcriptional modulator activated by BMP (bone morphogenetic proteins) type 1 receptor kinase. SMAD5 is a receptor-regulated SMAD (R-SMAD) (By similarity).</text>
</comment>
<comment type="subunit">
    <text evidence="1">May form trimers with the co-SMAD SMAD4.</text>
</comment>
<comment type="subcellular location">
    <subcellularLocation>
        <location evidence="1">Cytoplasm</location>
    </subcellularLocation>
    <subcellularLocation>
        <location evidence="1">Nucleus</location>
    </subcellularLocation>
    <text evidence="1">Cytoplasmic in the absence of ligand. Migrates to the nucleus when complexed with SMAD4 (By similarity).</text>
</comment>
<comment type="similarity">
    <text evidence="5">Belongs to the dwarfin/SMAD family.</text>
</comment>
<feature type="chain" id="PRO_0000291877" description="Mothers against decapentaplegic homolog 5">
    <location>
        <begin position="1"/>
        <end position="465"/>
    </location>
</feature>
<feature type="domain" description="MH1" evidence="2">
    <location>
        <begin position="13"/>
        <end position="137"/>
    </location>
</feature>
<feature type="domain" description="MH2" evidence="3">
    <location>
        <begin position="271"/>
        <end position="465"/>
    </location>
</feature>
<feature type="region of interest" description="Disordered" evidence="4">
    <location>
        <begin position="163"/>
        <end position="242"/>
    </location>
</feature>
<feature type="compositionally biased region" description="Polar residues" evidence="4">
    <location>
        <begin position="173"/>
        <end position="183"/>
    </location>
</feature>
<feature type="compositionally biased region" description="Low complexity" evidence="4">
    <location>
        <begin position="198"/>
        <end position="214"/>
    </location>
</feature>
<feature type="binding site" evidence="1">
    <location>
        <position position="65"/>
    </location>
    <ligand>
        <name>Zn(2+)</name>
        <dbReference type="ChEBI" id="CHEBI:29105"/>
    </ligand>
</feature>
<feature type="binding site" evidence="1">
    <location>
        <position position="110"/>
    </location>
    <ligand>
        <name>Zn(2+)</name>
        <dbReference type="ChEBI" id="CHEBI:29105"/>
    </ligand>
</feature>
<feature type="binding site" evidence="1">
    <location>
        <position position="122"/>
    </location>
    <ligand>
        <name>Zn(2+)</name>
        <dbReference type="ChEBI" id="CHEBI:29105"/>
    </ligand>
</feature>
<feature type="binding site" evidence="1">
    <location>
        <position position="127"/>
    </location>
    <ligand>
        <name>Zn(2+)</name>
        <dbReference type="ChEBI" id="CHEBI:29105"/>
    </ligand>
</feature>
<feature type="helix" evidence="6">
    <location>
        <begin position="13"/>
        <end position="19"/>
    </location>
</feature>
<feature type="helix" evidence="6">
    <location>
        <begin position="25"/>
        <end position="42"/>
    </location>
</feature>
<feature type="helix" evidence="6">
    <location>
        <begin position="48"/>
        <end position="57"/>
    </location>
</feature>
<feature type="strand" evidence="6">
    <location>
        <begin position="67"/>
        <end position="69"/>
    </location>
</feature>
<feature type="strand" evidence="6">
    <location>
        <begin position="72"/>
        <end position="74"/>
    </location>
</feature>
<feature type="strand" evidence="6">
    <location>
        <begin position="76"/>
        <end position="78"/>
    </location>
</feature>
<feature type="strand" evidence="6">
    <location>
        <begin position="81"/>
        <end position="83"/>
    </location>
</feature>
<feature type="helix" evidence="6">
    <location>
        <begin position="85"/>
        <end position="93"/>
    </location>
</feature>
<feature type="helix" evidence="6">
    <location>
        <begin position="101"/>
        <end position="103"/>
    </location>
</feature>
<feature type="strand" evidence="6">
    <location>
        <begin position="104"/>
        <end position="106"/>
    </location>
</feature>
<feature type="strand" evidence="6">
    <location>
        <begin position="119"/>
        <end position="122"/>
    </location>
</feature>
<feature type="helix" evidence="6">
    <location>
        <begin position="125"/>
        <end position="127"/>
    </location>
</feature>
<feature type="strand" evidence="6">
    <location>
        <begin position="128"/>
        <end position="130"/>
    </location>
</feature>
<protein>
    <recommendedName>
        <fullName>Mothers against decapentaplegic homolog 5</fullName>
        <shortName>MAD homolog 5</shortName>
        <shortName>Mothers against DPP homolog 5</shortName>
    </recommendedName>
    <alternativeName>
        <fullName>SMAD family member 5</fullName>
        <shortName>SMAD 5</shortName>
        <shortName>Smad5</shortName>
    </alternativeName>
</protein>
<evidence type="ECO:0000250" key="1"/>
<evidence type="ECO:0000255" key="2">
    <source>
        <dbReference type="PROSITE-ProRule" id="PRU00438"/>
    </source>
</evidence>
<evidence type="ECO:0000255" key="3">
    <source>
        <dbReference type="PROSITE-ProRule" id="PRU00439"/>
    </source>
</evidence>
<evidence type="ECO:0000256" key="4">
    <source>
        <dbReference type="SAM" id="MobiDB-lite"/>
    </source>
</evidence>
<evidence type="ECO:0000305" key="5"/>
<evidence type="ECO:0007829" key="6">
    <source>
        <dbReference type="PDB" id="6TBZ"/>
    </source>
</evidence>
<keyword id="KW-0002">3D-structure</keyword>
<keyword id="KW-0963">Cytoplasm</keyword>
<keyword id="KW-0238">DNA-binding</keyword>
<keyword id="KW-0479">Metal-binding</keyword>
<keyword id="KW-0539">Nucleus</keyword>
<keyword id="KW-1185">Reference proteome</keyword>
<keyword id="KW-0804">Transcription</keyword>
<keyword id="KW-0805">Transcription regulation</keyword>
<keyword id="KW-0862">Zinc</keyword>